<organism>
    <name type="scientific">Mus musculus</name>
    <name type="common">Mouse</name>
    <dbReference type="NCBI Taxonomy" id="10090"/>
    <lineage>
        <taxon>Eukaryota</taxon>
        <taxon>Metazoa</taxon>
        <taxon>Chordata</taxon>
        <taxon>Craniata</taxon>
        <taxon>Vertebrata</taxon>
        <taxon>Euteleostomi</taxon>
        <taxon>Mammalia</taxon>
        <taxon>Eutheria</taxon>
        <taxon>Euarchontoglires</taxon>
        <taxon>Glires</taxon>
        <taxon>Rodentia</taxon>
        <taxon>Myomorpha</taxon>
        <taxon>Muroidea</taxon>
        <taxon>Muridae</taxon>
        <taxon>Murinae</taxon>
        <taxon>Mus</taxon>
        <taxon>Mus</taxon>
    </lineage>
</organism>
<sequence length="346" mass="40249">MASLGRQVPEWHRLLALSWACLVRQTPHLREQKQMSPSLSCKLTTVPGRGSFQEFSSITPQKYMQEPENRTRLVQCLHEEQKPCVDPESLEPEKVIRSLQDMGFAEAHIHSLFSIQPSVHPQQLLGIVSELLLLGLNPEPVFNALKKNPQLLKLSSMQMKRRSSYLRKLGLGEGKLKRVLSVCPEVFTMHQRDIDRVVKVLREKCLFTAQHITDVLHRCPTVLQEDPNELEYKFQYAYFRMGLTHLDIVRTNFLQYSITKIKQRHIYLERLGRYQTPDKKGQTQIPNPSLRNILRVSEAEFLARTACSSVEEFQVFKKLLDQEEEEESESHASEEEEEEEEEEELL</sequence>
<evidence type="ECO:0000250" key="1"/>
<evidence type="ECO:0000256" key="2">
    <source>
        <dbReference type="SAM" id="MobiDB-lite"/>
    </source>
</evidence>
<evidence type="ECO:0000269" key="3">
    <source>
    </source>
</evidence>
<evidence type="ECO:0000305" key="4"/>
<reference key="1">
    <citation type="journal article" date="2005" name="Science">
        <title>The transcriptional landscape of the mammalian genome.</title>
        <authorList>
            <person name="Carninci P."/>
            <person name="Kasukawa T."/>
            <person name="Katayama S."/>
            <person name="Gough J."/>
            <person name="Frith M.C."/>
            <person name="Maeda N."/>
            <person name="Oyama R."/>
            <person name="Ravasi T."/>
            <person name="Lenhard B."/>
            <person name="Wells C."/>
            <person name="Kodzius R."/>
            <person name="Shimokawa K."/>
            <person name="Bajic V.B."/>
            <person name="Brenner S.E."/>
            <person name="Batalov S."/>
            <person name="Forrest A.R."/>
            <person name="Zavolan M."/>
            <person name="Davis M.J."/>
            <person name="Wilming L.G."/>
            <person name="Aidinis V."/>
            <person name="Allen J.E."/>
            <person name="Ambesi-Impiombato A."/>
            <person name="Apweiler R."/>
            <person name="Aturaliya R.N."/>
            <person name="Bailey T.L."/>
            <person name="Bansal M."/>
            <person name="Baxter L."/>
            <person name="Beisel K.W."/>
            <person name="Bersano T."/>
            <person name="Bono H."/>
            <person name="Chalk A.M."/>
            <person name="Chiu K.P."/>
            <person name="Choudhary V."/>
            <person name="Christoffels A."/>
            <person name="Clutterbuck D.R."/>
            <person name="Crowe M.L."/>
            <person name="Dalla E."/>
            <person name="Dalrymple B.P."/>
            <person name="de Bono B."/>
            <person name="Della Gatta G."/>
            <person name="di Bernardo D."/>
            <person name="Down T."/>
            <person name="Engstrom P."/>
            <person name="Fagiolini M."/>
            <person name="Faulkner G."/>
            <person name="Fletcher C.F."/>
            <person name="Fukushima T."/>
            <person name="Furuno M."/>
            <person name="Futaki S."/>
            <person name="Gariboldi M."/>
            <person name="Georgii-Hemming P."/>
            <person name="Gingeras T.R."/>
            <person name="Gojobori T."/>
            <person name="Green R.E."/>
            <person name="Gustincich S."/>
            <person name="Harbers M."/>
            <person name="Hayashi Y."/>
            <person name="Hensch T.K."/>
            <person name="Hirokawa N."/>
            <person name="Hill D."/>
            <person name="Huminiecki L."/>
            <person name="Iacono M."/>
            <person name="Ikeo K."/>
            <person name="Iwama A."/>
            <person name="Ishikawa T."/>
            <person name="Jakt M."/>
            <person name="Kanapin A."/>
            <person name="Katoh M."/>
            <person name="Kawasawa Y."/>
            <person name="Kelso J."/>
            <person name="Kitamura H."/>
            <person name="Kitano H."/>
            <person name="Kollias G."/>
            <person name="Krishnan S.P."/>
            <person name="Kruger A."/>
            <person name="Kummerfeld S.K."/>
            <person name="Kurochkin I.V."/>
            <person name="Lareau L.F."/>
            <person name="Lazarevic D."/>
            <person name="Lipovich L."/>
            <person name="Liu J."/>
            <person name="Liuni S."/>
            <person name="McWilliam S."/>
            <person name="Madan Babu M."/>
            <person name="Madera M."/>
            <person name="Marchionni L."/>
            <person name="Matsuda H."/>
            <person name="Matsuzawa S."/>
            <person name="Miki H."/>
            <person name="Mignone F."/>
            <person name="Miyake S."/>
            <person name="Morris K."/>
            <person name="Mottagui-Tabar S."/>
            <person name="Mulder N."/>
            <person name="Nakano N."/>
            <person name="Nakauchi H."/>
            <person name="Ng P."/>
            <person name="Nilsson R."/>
            <person name="Nishiguchi S."/>
            <person name="Nishikawa S."/>
            <person name="Nori F."/>
            <person name="Ohara O."/>
            <person name="Okazaki Y."/>
            <person name="Orlando V."/>
            <person name="Pang K.C."/>
            <person name="Pavan W.J."/>
            <person name="Pavesi G."/>
            <person name="Pesole G."/>
            <person name="Petrovsky N."/>
            <person name="Piazza S."/>
            <person name="Reed J."/>
            <person name="Reid J.F."/>
            <person name="Ring B.Z."/>
            <person name="Ringwald M."/>
            <person name="Rost B."/>
            <person name="Ruan Y."/>
            <person name="Salzberg S.L."/>
            <person name="Sandelin A."/>
            <person name="Schneider C."/>
            <person name="Schoenbach C."/>
            <person name="Sekiguchi K."/>
            <person name="Semple C.A."/>
            <person name="Seno S."/>
            <person name="Sessa L."/>
            <person name="Sheng Y."/>
            <person name="Shibata Y."/>
            <person name="Shimada H."/>
            <person name="Shimada K."/>
            <person name="Silva D."/>
            <person name="Sinclair B."/>
            <person name="Sperling S."/>
            <person name="Stupka E."/>
            <person name="Sugiura K."/>
            <person name="Sultana R."/>
            <person name="Takenaka Y."/>
            <person name="Taki K."/>
            <person name="Tammoja K."/>
            <person name="Tan S.L."/>
            <person name="Tang S."/>
            <person name="Taylor M.S."/>
            <person name="Tegner J."/>
            <person name="Teichmann S.A."/>
            <person name="Ueda H.R."/>
            <person name="van Nimwegen E."/>
            <person name="Verardo R."/>
            <person name="Wei C.L."/>
            <person name="Yagi K."/>
            <person name="Yamanishi H."/>
            <person name="Zabarovsky E."/>
            <person name="Zhu S."/>
            <person name="Zimmer A."/>
            <person name="Hide W."/>
            <person name="Bult C."/>
            <person name="Grimmond S.M."/>
            <person name="Teasdale R.D."/>
            <person name="Liu E.T."/>
            <person name="Brusic V."/>
            <person name="Quackenbush J."/>
            <person name="Wahlestedt C."/>
            <person name="Mattick J.S."/>
            <person name="Hume D.A."/>
            <person name="Kai C."/>
            <person name="Sasaki D."/>
            <person name="Tomaru Y."/>
            <person name="Fukuda S."/>
            <person name="Kanamori-Katayama M."/>
            <person name="Suzuki M."/>
            <person name="Aoki J."/>
            <person name="Arakawa T."/>
            <person name="Iida J."/>
            <person name="Imamura K."/>
            <person name="Itoh M."/>
            <person name="Kato T."/>
            <person name="Kawaji H."/>
            <person name="Kawagashira N."/>
            <person name="Kawashima T."/>
            <person name="Kojima M."/>
            <person name="Kondo S."/>
            <person name="Konno H."/>
            <person name="Nakano K."/>
            <person name="Ninomiya N."/>
            <person name="Nishio T."/>
            <person name="Okada M."/>
            <person name="Plessy C."/>
            <person name="Shibata K."/>
            <person name="Shiraki T."/>
            <person name="Suzuki S."/>
            <person name="Tagami M."/>
            <person name="Waki K."/>
            <person name="Watahiki A."/>
            <person name="Okamura-Oho Y."/>
            <person name="Suzuki H."/>
            <person name="Kawai J."/>
            <person name="Hayashizaki Y."/>
        </authorList>
    </citation>
    <scope>NUCLEOTIDE SEQUENCE [LARGE SCALE MRNA]</scope>
    <source>
        <strain>C57BL/6J</strain>
        <tissue>Testis</tissue>
    </source>
</reference>
<reference key="2">
    <citation type="journal article" date="2004" name="Genome Res.">
        <title>The status, quality, and expansion of the NIH full-length cDNA project: the Mammalian Gene Collection (MGC).</title>
        <authorList>
            <consortium name="The MGC Project Team"/>
        </authorList>
    </citation>
    <scope>NUCLEOTIDE SEQUENCE [LARGE SCALE MRNA]</scope>
    <source>
        <strain>FVB/N</strain>
        <tissue>Kidney</tissue>
        <tissue>Mammary tumor</tissue>
    </source>
</reference>
<reference key="3">
    <citation type="journal article" date="2011" name="Cell Metab.">
        <title>MTERF4 regulates translation by targeting the methyltransferase NSUN4 to the mammalian mitochondrial ribosome.</title>
        <authorList>
            <person name="Camara Y."/>
            <person name="Asin-Cayuela J."/>
            <person name="Park C.B."/>
            <person name="Metodiev M.D."/>
            <person name="Shi Y."/>
            <person name="Ruzzenente B."/>
            <person name="Kukat C."/>
            <person name="Habermann B."/>
            <person name="Wibom R."/>
            <person name="Hultenby K."/>
            <person name="Franz T."/>
            <person name="Erdjument-Bromage H."/>
            <person name="Tempst P."/>
            <person name="Hallberg B.M."/>
            <person name="Gustafsson C.M."/>
            <person name="Larsson N.G."/>
        </authorList>
    </citation>
    <scope>FUNCTION</scope>
    <scope>TISSUE SPECIFICITY</scope>
    <scope>SUBCELLULAR LOCATION</scope>
    <scope>DISRUPTION PHENOTYPE</scope>
    <scope>CONDITIONAL KNOCKOUT</scope>
</reference>
<protein>
    <recommendedName>
        <fullName>Transcription termination factor 4, mitochondrial</fullName>
    </recommendedName>
    <alternativeName>
        <fullName>Mitochondrial transcription termination factor 4</fullName>
    </alternativeName>
    <alternativeName>
        <fullName>mTERF domain-containing protein 2</fullName>
    </alternativeName>
</protein>
<gene>
    <name type="primary">Mterf4</name>
    <name type="synonym">Mterfd2</name>
    <name type="ordered locus">HSPC096</name>
</gene>
<comment type="function">
    <text evidence="1 3">Regulator of mitochondrial ribosome biogenesis and translation. Binds to mitochondrial ribosomal RNAs 16S, 12S and 7S (By similarity). Targets NSUN4 RNA methyltransferase to the mitochondrial large ribosomal subunit.</text>
</comment>
<comment type="subunit">
    <text evidence="1">Heterodimer with NSUN4; this interaction may be required for NSUN4 recruitment to the mitochondrial large ribosomal subunit.</text>
</comment>
<comment type="subcellular location">
    <subcellularLocation>
        <location evidence="3">Mitochondrion</location>
    </subcellularLocation>
</comment>
<comment type="tissue specificity">
    <text evidence="3">Widely expressed, with highest levels in liver, followed by testis, kidney and brain.</text>
</comment>
<comment type="domain">
    <text evidence="1">The MTERF repeats form a half-donut shaped, right-handed superhelix, where the concave side displays a positively charged path for nucleic acid interaction.</text>
</comment>
<comment type="disruption phenotype">
    <text evidence="3">Ablation of the gene is not viable. At 8.5 dpc, mutant homozygous embryos exhibit much reduced size, lack of heart and no optic disks. Conditional knockout in heart leads to severe mitochondrial cardiomyopathy. Premature death occurs at about 21 weeks and decreased body weight is observed from 15 weeks until death.</text>
</comment>
<comment type="similarity">
    <text evidence="4">Belongs to the mTERF family.</text>
</comment>
<comment type="sequence caution" evidence="4">
    <conflict type="erroneous initiation">
        <sequence resource="EMBL-CDS" id="AAH02280"/>
    </conflict>
    <text>Truncated N-terminus.</text>
</comment>
<comment type="sequence caution" evidence="4">
    <conflict type="erroneous initiation">
        <sequence resource="EMBL-CDS" id="AAH55877"/>
    </conflict>
    <text>Truncated N-terminus.</text>
</comment>
<proteinExistence type="evidence at transcript level"/>
<dbReference type="EMBL" id="AK077142">
    <property type="protein sequence ID" value="BAC36640.1"/>
    <property type="molecule type" value="mRNA"/>
</dbReference>
<dbReference type="EMBL" id="BC002280">
    <property type="protein sequence ID" value="AAH02280.1"/>
    <property type="status" value="ALT_INIT"/>
    <property type="molecule type" value="mRNA"/>
</dbReference>
<dbReference type="EMBL" id="BC055877">
    <property type="protein sequence ID" value="AAH55877.1"/>
    <property type="status" value="ALT_INIT"/>
    <property type="molecule type" value="mRNA"/>
</dbReference>
<dbReference type="EMBL" id="BC064709">
    <property type="protein sequence ID" value="AAH64709.1"/>
    <property type="molecule type" value="mRNA"/>
</dbReference>
<dbReference type="CCDS" id="CCDS35671.1"/>
<dbReference type="RefSeq" id="NP_835152.1">
    <property type="nucleotide sequence ID" value="NM_178051.4"/>
</dbReference>
<dbReference type="SMR" id="Q8BVN4"/>
<dbReference type="BioGRID" id="213702">
    <property type="interactions" value="3"/>
</dbReference>
<dbReference type="FunCoup" id="Q8BVN4">
    <property type="interactions" value="2629"/>
</dbReference>
<dbReference type="STRING" id="10090.ENSMUSP00000027492"/>
<dbReference type="iPTMnet" id="Q8BVN4"/>
<dbReference type="PhosphoSitePlus" id="Q8BVN4"/>
<dbReference type="PaxDb" id="10090-ENSMUSP00000027492"/>
<dbReference type="PeptideAtlas" id="Q8BVN4"/>
<dbReference type="ProteomicsDB" id="291430"/>
<dbReference type="Pumba" id="Q8BVN4"/>
<dbReference type="Antibodypedia" id="34543">
    <property type="antibodies" value="59 antibodies from 18 providers"/>
</dbReference>
<dbReference type="DNASU" id="69821"/>
<dbReference type="Ensembl" id="ENSMUST00000027492.14">
    <property type="protein sequence ID" value="ENSMUSP00000027492.8"/>
    <property type="gene ID" value="ENSMUSG00000026273.14"/>
</dbReference>
<dbReference type="GeneID" id="69821"/>
<dbReference type="KEGG" id="mmu:69821"/>
<dbReference type="UCSC" id="uc007cdo.1">
    <property type="organism name" value="mouse"/>
</dbReference>
<dbReference type="AGR" id="MGI:1918355"/>
<dbReference type="CTD" id="130916"/>
<dbReference type="MGI" id="MGI:1918355">
    <property type="gene designation" value="Mterf4"/>
</dbReference>
<dbReference type="VEuPathDB" id="HostDB:ENSMUSG00000026273"/>
<dbReference type="eggNOG" id="ENOG502RXUW">
    <property type="taxonomic scope" value="Eukaryota"/>
</dbReference>
<dbReference type="GeneTree" id="ENSGT00460000041648"/>
<dbReference type="HOGENOM" id="CLU_069384_1_0_1"/>
<dbReference type="InParanoid" id="Q8BVN4"/>
<dbReference type="OMA" id="QAEMVKC"/>
<dbReference type="OrthoDB" id="9991972at2759"/>
<dbReference type="PhylomeDB" id="Q8BVN4"/>
<dbReference type="TreeFam" id="TF329452"/>
<dbReference type="BioGRID-ORCS" id="69821">
    <property type="hits" value="17 hits in 80 CRISPR screens"/>
</dbReference>
<dbReference type="ChiTaRS" id="Mterf4">
    <property type="organism name" value="mouse"/>
</dbReference>
<dbReference type="PRO" id="PR:Q8BVN4"/>
<dbReference type="Proteomes" id="UP000000589">
    <property type="component" value="Chromosome 1"/>
</dbReference>
<dbReference type="RNAct" id="Q8BVN4">
    <property type="molecule type" value="protein"/>
</dbReference>
<dbReference type="Bgee" id="ENSMUSG00000026273">
    <property type="expression patterns" value="Expressed in animal zygote and 251 other cell types or tissues"/>
</dbReference>
<dbReference type="ExpressionAtlas" id="Q8BVN4">
    <property type="expression patterns" value="baseline and differential"/>
</dbReference>
<dbReference type="GO" id="GO:0005829">
    <property type="term" value="C:cytosol"/>
    <property type="evidence" value="ECO:0007669"/>
    <property type="project" value="Ensembl"/>
</dbReference>
<dbReference type="GO" id="GO:0005762">
    <property type="term" value="C:mitochondrial large ribosomal subunit"/>
    <property type="evidence" value="ECO:0000266"/>
    <property type="project" value="MGI"/>
</dbReference>
<dbReference type="GO" id="GO:0005739">
    <property type="term" value="C:mitochondrion"/>
    <property type="evidence" value="ECO:0000314"/>
    <property type="project" value="MGI"/>
</dbReference>
<dbReference type="GO" id="GO:0003690">
    <property type="term" value="F:double-stranded DNA binding"/>
    <property type="evidence" value="ECO:0007669"/>
    <property type="project" value="InterPro"/>
</dbReference>
<dbReference type="GO" id="GO:0019843">
    <property type="term" value="F:rRNA binding"/>
    <property type="evidence" value="ECO:0000266"/>
    <property type="project" value="MGI"/>
</dbReference>
<dbReference type="GO" id="GO:0043010">
    <property type="term" value="P:camera-type eye development"/>
    <property type="evidence" value="ECO:0000315"/>
    <property type="project" value="MGI"/>
</dbReference>
<dbReference type="GO" id="GO:0007507">
    <property type="term" value="P:heart development"/>
    <property type="evidence" value="ECO:0000315"/>
    <property type="project" value="MGI"/>
</dbReference>
<dbReference type="GO" id="GO:0006390">
    <property type="term" value="P:mitochondrial transcription"/>
    <property type="evidence" value="ECO:0000315"/>
    <property type="project" value="MGI"/>
</dbReference>
<dbReference type="GO" id="GO:0006626">
    <property type="term" value="P:protein targeting to mitochondrion"/>
    <property type="evidence" value="ECO:0000315"/>
    <property type="project" value="MGI"/>
</dbReference>
<dbReference type="GO" id="GO:0006355">
    <property type="term" value="P:regulation of DNA-templated transcription"/>
    <property type="evidence" value="ECO:0007669"/>
    <property type="project" value="InterPro"/>
</dbReference>
<dbReference type="GO" id="GO:0042255">
    <property type="term" value="P:ribosome assembly"/>
    <property type="evidence" value="ECO:0000315"/>
    <property type="project" value="MGI"/>
</dbReference>
<dbReference type="GO" id="GO:0006364">
    <property type="term" value="P:rRNA processing"/>
    <property type="evidence" value="ECO:0007669"/>
    <property type="project" value="UniProtKB-KW"/>
</dbReference>
<dbReference type="FunFam" id="1.25.70.10:FF:000011">
    <property type="entry name" value="Mitochondrial transcription termination factor 4"/>
    <property type="match status" value="1"/>
</dbReference>
<dbReference type="Gene3D" id="1.25.70.10">
    <property type="entry name" value="Transcription termination factor 3, mitochondrial"/>
    <property type="match status" value="1"/>
</dbReference>
<dbReference type="InterPro" id="IPR003690">
    <property type="entry name" value="MTERF"/>
</dbReference>
<dbReference type="InterPro" id="IPR038538">
    <property type="entry name" value="MTERF_sf"/>
</dbReference>
<dbReference type="PANTHER" id="PTHR13068">
    <property type="entry name" value="CGI-12 PROTEIN-RELATED"/>
    <property type="match status" value="1"/>
</dbReference>
<dbReference type="Pfam" id="PF02536">
    <property type="entry name" value="mTERF"/>
    <property type="match status" value="1"/>
</dbReference>
<dbReference type="SMART" id="SM00733">
    <property type="entry name" value="Mterf"/>
    <property type="match status" value="4"/>
</dbReference>
<feature type="transit peptide" description="Mitochondrion" evidence="1">
    <location>
        <begin position="1"/>
        <end position="42"/>
    </location>
</feature>
<feature type="chain" id="PRO_0000255462" description="Transcription termination factor 4, mitochondrial">
    <location>
        <begin position="43"/>
        <end position="346"/>
    </location>
</feature>
<feature type="repeat" description="MTERF 1">
    <location>
        <begin position="142"/>
        <end position="172"/>
    </location>
</feature>
<feature type="repeat" description="MTERF 2">
    <location>
        <begin position="177"/>
        <end position="204"/>
    </location>
</feature>
<feature type="repeat" description="MTERF 3">
    <location>
        <begin position="209"/>
        <end position="239"/>
    </location>
</feature>
<feature type="repeat" description="MTERF 4">
    <location>
        <begin position="245"/>
        <end position="270"/>
    </location>
</feature>
<feature type="repeat" description="MTERF 5">
    <location>
        <begin position="290"/>
        <end position="318"/>
    </location>
</feature>
<feature type="region of interest" description="Dimerization with NSUN4" evidence="1">
    <location>
        <begin position="310"/>
        <end position="327"/>
    </location>
</feature>
<feature type="region of interest" description="Disordered" evidence="2">
    <location>
        <begin position="321"/>
        <end position="346"/>
    </location>
</feature>
<feature type="compositionally biased region" description="Acidic residues" evidence="2">
    <location>
        <begin position="322"/>
        <end position="346"/>
    </location>
</feature>
<feature type="sequence conflict" description="In Ref. 2; AAH02280/AAH55877." evidence="4" ref="2">
    <original>S</original>
    <variation>N</variation>
    <location>
        <position position="156"/>
    </location>
</feature>
<name>MTEF4_MOUSE</name>
<accession>Q8BVN4</accession>
<accession>Q99LQ0</accession>
<keyword id="KW-0496">Mitochondrion</keyword>
<keyword id="KW-1185">Reference proteome</keyword>
<keyword id="KW-0677">Repeat</keyword>
<keyword id="KW-0694">RNA-binding</keyword>
<keyword id="KW-0698">rRNA processing</keyword>
<keyword id="KW-0809">Transit peptide</keyword>